<evidence type="ECO:0000255" key="1">
    <source>
        <dbReference type="HAMAP-Rule" id="MF_00532"/>
    </source>
</evidence>
<evidence type="ECO:0000256" key="2">
    <source>
        <dbReference type="SAM" id="MobiDB-lite"/>
    </source>
</evidence>
<evidence type="ECO:0000305" key="3"/>
<feature type="chain" id="PRO_1000128183" description="Small ribosomal subunit protein uS9">
    <location>
        <begin position="1"/>
        <end position="130"/>
    </location>
</feature>
<feature type="region of interest" description="Disordered" evidence="2">
    <location>
        <begin position="106"/>
        <end position="130"/>
    </location>
</feature>
<feature type="compositionally biased region" description="Basic residues" evidence="2">
    <location>
        <begin position="111"/>
        <end position="130"/>
    </location>
</feature>
<comment type="similarity">
    <text evidence="1">Belongs to the universal ribosomal protein uS9 family.</text>
</comment>
<sequence length="130" mass="14234">MSQAQYAGTGRRKNAVARVRLVPGTGKITVNKKDVEEYIPHADLRLVINQPFAVTSTVGSYDVFVNVVGGGYAGQSGAIRHGIARALLQVDPDFRDSLKRAGLLTRDSRKVERKKPGLKKARKASQFSKR</sequence>
<gene>
    <name evidence="1" type="primary">rpsI</name>
    <name type="ordered locus">SPCG_0309</name>
</gene>
<organism>
    <name type="scientific">Streptococcus pneumoniae (strain CGSP14)</name>
    <dbReference type="NCBI Taxonomy" id="516950"/>
    <lineage>
        <taxon>Bacteria</taxon>
        <taxon>Bacillati</taxon>
        <taxon>Bacillota</taxon>
        <taxon>Bacilli</taxon>
        <taxon>Lactobacillales</taxon>
        <taxon>Streptococcaceae</taxon>
        <taxon>Streptococcus</taxon>
    </lineage>
</organism>
<protein>
    <recommendedName>
        <fullName evidence="1">Small ribosomal subunit protein uS9</fullName>
    </recommendedName>
    <alternativeName>
        <fullName evidence="3">30S ribosomal protein S9</fullName>
    </alternativeName>
</protein>
<name>RS9_STRPS</name>
<dbReference type="EMBL" id="CP001033">
    <property type="protein sequence ID" value="ACB89561.1"/>
    <property type="molecule type" value="Genomic_DNA"/>
</dbReference>
<dbReference type="RefSeq" id="WP_000075973.1">
    <property type="nucleotide sequence ID" value="NC_010582.1"/>
</dbReference>
<dbReference type="SMR" id="B2ISM4"/>
<dbReference type="GeneID" id="93922492"/>
<dbReference type="KEGG" id="spw:SPCG_0309"/>
<dbReference type="HOGENOM" id="CLU_046483_2_1_9"/>
<dbReference type="GO" id="GO:0022627">
    <property type="term" value="C:cytosolic small ribosomal subunit"/>
    <property type="evidence" value="ECO:0007669"/>
    <property type="project" value="TreeGrafter"/>
</dbReference>
<dbReference type="GO" id="GO:0003723">
    <property type="term" value="F:RNA binding"/>
    <property type="evidence" value="ECO:0007669"/>
    <property type="project" value="TreeGrafter"/>
</dbReference>
<dbReference type="GO" id="GO:0003735">
    <property type="term" value="F:structural constituent of ribosome"/>
    <property type="evidence" value="ECO:0007669"/>
    <property type="project" value="InterPro"/>
</dbReference>
<dbReference type="GO" id="GO:0006412">
    <property type="term" value="P:translation"/>
    <property type="evidence" value="ECO:0007669"/>
    <property type="project" value="UniProtKB-UniRule"/>
</dbReference>
<dbReference type="FunFam" id="3.30.230.10:FF:000001">
    <property type="entry name" value="30S ribosomal protein S9"/>
    <property type="match status" value="1"/>
</dbReference>
<dbReference type="Gene3D" id="3.30.230.10">
    <property type="match status" value="1"/>
</dbReference>
<dbReference type="HAMAP" id="MF_00532_B">
    <property type="entry name" value="Ribosomal_uS9_B"/>
    <property type="match status" value="1"/>
</dbReference>
<dbReference type="InterPro" id="IPR020568">
    <property type="entry name" value="Ribosomal_Su5_D2-typ_SF"/>
</dbReference>
<dbReference type="InterPro" id="IPR000754">
    <property type="entry name" value="Ribosomal_uS9"/>
</dbReference>
<dbReference type="InterPro" id="IPR023035">
    <property type="entry name" value="Ribosomal_uS9_bac/plastid"/>
</dbReference>
<dbReference type="InterPro" id="IPR020574">
    <property type="entry name" value="Ribosomal_uS9_CS"/>
</dbReference>
<dbReference type="InterPro" id="IPR014721">
    <property type="entry name" value="Ribsml_uS5_D2-typ_fold_subgr"/>
</dbReference>
<dbReference type="NCBIfam" id="NF001099">
    <property type="entry name" value="PRK00132.1"/>
    <property type="match status" value="1"/>
</dbReference>
<dbReference type="PANTHER" id="PTHR21569">
    <property type="entry name" value="RIBOSOMAL PROTEIN S9"/>
    <property type="match status" value="1"/>
</dbReference>
<dbReference type="PANTHER" id="PTHR21569:SF1">
    <property type="entry name" value="SMALL RIBOSOMAL SUBUNIT PROTEIN US9M"/>
    <property type="match status" value="1"/>
</dbReference>
<dbReference type="Pfam" id="PF00380">
    <property type="entry name" value="Ribosomal_S9"/>
    <property type="match status" value="1"/>
</dbReference>
<dbReference type="SUPFAM" id="SSF54211">
    <property type="entry name" value="Ribosomal protein S5 domain 2-like"/>
    <property type="match status" value="1"/>
</dbReference>
<dbReference type="PROSITE" id="PS00360">
    <property type="entry name" value="RIBOSOMAL_S9"/>
    <property type="match status" value="1"/>
</dbReference>
<keyword id="KW-0687">Ribonucleoprotein</keyword>
<keyword id="KW-0689">Ribosomal protein</keyword>
<proteinExistence type="inferred from homology"/>
<accession>B2ISM4</accession>
<reference key="1">
    <citation type="journal article" date="2009" name="BMC Genomics">
        <title>Genome evolution driven by host adaptations results in a more virulent and antimicrobial-resistant Streptococcus pneumoniae serotype 14.</title>
        <authorList>
            <person name="Ding F."/>
            <person name="Tang P."/>
            <person name="Hsu M.-H."/>
            <person name="Cui P."/>
            <person name="Hu S."/>
            <person name="Yu J."/>
            <person name="Chiu C.-H."/>
        </authorList>
    </citation>
    <scope>NUCLEOTIDE SEQUENCE [LARGE SCALE GENOMIC DNA]</scope>
    <source>
        <strain>CGSP14</strain>
    </source>
</reference>